<comment type="function">
    <text evidence="1">Catalyzes the dephosphorylation of undecaprenyl diphosphate (UPP). Confers resistance to bacitracin.</text>
</comment>
<comment type="catalytic activity">
    <reaction evidence="1">
        <text>di-trans,octa-cis-undecaprenyl diphosphate + H2O = di-trans,octa-cis-undecaprenyl phosphate + phosphate + H(+)</text>
        <dbReference type="Rhea" id="RHEA:28094"/>
        <dbReference type="ChEBI" id="CHEBI:15377"/>
        <dbReference type="ChEBI" id="CHEBI:15378"/>
        <dbReference type="ChEBI" id="CHEBI:43474"/>
        <dbReference type="ChEBI" id="CHEBI:58405"/>
        <dbReference type="ChEBI" id="CHEBI:60392"/>
        <dbReference type="EC" id="3.6.1.27"/>
    </reaction>
</comment>
<comment type="subcellular location">
    <subcellularLocation>
        <location evidence="1">Cell inner membrane</location>
        <topology evidence="1">Multi-pass membrane protein</topology>
    </subcellularLocation>
</comment>
<comment type="miscellaneous">
    <text>Bacitracin is thought to be involved in the inhibition of peptidoglycan synthesis by sequestering undecaprenyl diphosphate, thereby reducing the pool of lipid carrier available.</text>
</comment>
<comment type="similarity">
    <text evidence="1">Belongs to the UppP family.</text>
</comment>
<evidence type="ECO:0000255" key="1">
    <source>
        <dbReference type="HAMAP-Rule" id="MF_01006"/>
    </source>
</evidence>
<reference key="1">
    <citation type="journal article" date="2003" name="Proc. Natl. Acad. Sci. U.S.A.">
        <title>The complete genome sequence of the Arabidopsis and tomato pathogen Pseudomonas syringae pv. tomato DC3000.</title>
        <authorList>
            <person name="Buell C.R."/>
            <person name="Joardar V."/>
            <person name="Lindeberg M."/>
            <person name="Selengut J."/>
            <person name="Paulsen I.T."/>
            <person name="Gwinn M.L."/>
            <person name="Dodson R.J."/>
            <person name="DeBoy R.T."/>
            <person name="Durkin A.S."/>
            <person name="Kolonay J.F."/>
            <person name="Madupu R."/>
            <person name="Daugherty S.C."/>
            <person name="Brinkac L.M."/>
            <person name="Beanan M.J."/>
            <person name="Haft D.H."/>
            <person name="Nelson W.C."/>
            <person name="Davidsen T.M."/>
            <person name="Zafar N."/>
            <person name="Zhou L."/>
            <person name="Liu J."/>
            <person name="Yuan Q."/>
            <person name="Khouri H.M."/>
            <person name="Fedorova N.B."/>
            <person name="Tran B."/>
            <person name="Russell D."/>
            <person name="Berry K.J."/>
            <person name="Utterback T.R."/>
            <person name="Van Aken S.E."/>
            <person name="Feldblyum T.V."/>
            <person name="D'Ascenzo M."/>
            <person name="Deng W.-L."/>
            <person name="Ramos A.R."/>
            <person name="Alfano J.R."/>
            <person name="Cartinhour S."/>
            <person name="Chatterjee A.K."/>
            <person name="Delaney T.P."/>
            <person name="Lazarowitz S.G."/>
            <person name="Martin G.B."/>
            <person name="Schneider D.J."/>
            <person name="Tang X."/>
            <person name="Bender C.L."/>
            <person name="White O."/>
            <person name="Fraser C.M."/>
            <person name="Collmer A."/>
        </authorList>
    </citation>
    <scope>NUCLEOTIDE SEQUENCE [LARGE SCALE GENOMIC DNA]</scope>
    <source>
        <strain>ATCC BAA-871 / DC3000</strain>
    </source>
</reference>
<sequence>MDLWTAAQALILGIVEGLTEFLPISSTGHQIIVADLIDFGGERAMAFNIIIQLGAILAVVWEFRRKILDVVVGLPKQQEAQRFTLNLLIAFMPAVVLGVIFADTIHHYLFNAITVATALVVGGVIMLWAERRVHTVRTETVDDMTWRDALKIGLVQCLAMIPGTSRSGSTIIGGLLFGLSRKAATEFSFFLAMPTMVGAAVYSGYKYRDMFRPDDFAVFAIGFITSFVFAMIAVRALLKFIATHSYAVFAWYRIAFGLLILATWQFGWIDWASAKA</sequence>
<keyword id="KW-0046">Antibiotic resistance</keyword>
<keyword id="KW-0997">Cell inner membrane</keyword>
<keyword id="KW-1003">Cell membrane</keyword>
<keyword id="KW-0133">Cell shape</keyword>
<keyword id="KW-0961">Cell wall biogenesis/degradation</keyword>
<keyword id="KW-0378">Hydrolase</keyword>
<keyword id="KW-0472">Membrane</keyword>
<keyword id="KW-0573">Peptidoglycan synthesis</keyword>
<keyword id="KW-1185">Reference proteome</keyword>
<keyword id="KW-0812">Transmembrane</keyword>
<keyword id="KW-1133">Transmembrane helix</keyword>
<feature type="chain" id="PRO_0000151183" description="Undecaprenyl-diphosphatase">
    <location>
        <begin position="1"/>
        <end position="276"/>
    </location>
</feature>
<feature type="transmembrane region" description="Helical" evidence="1">
    <location>
        <begin position="43"/>
        <end position="63"/>
    </location>
</feature>
<feature type="transmembrane region" description="Helical" evidence="1">
    <location>
        <begin position="85"/>
        <end position="105"/>
    </location>
</feature>
<feature type="transmembrane region" description="Helical" evidence="1">
    <location>
        <begin position="109"/>
        <end position="129"/>
    </location>
</feature>
<feature type="transmembrane region" description="Helical" evidence="1">
    <location>
        <begin position="183"/>
        <end position="203"/>
    </location>
</feature>
<feature type="transmembrane region" description="Helical" evidence="1">
    <location>
        <begin position="218"/>
        <end position="238"/>
    </location>
</feature>
<feature type="transmembrane region" description="Helical" evidence="1">
    <location>
        <begin position="254"/>
        <end position="274"/>
    </location>
</feature>
<proteinExistence type="inferred from homology"/>
<organism>
    <name type="scientific">Pseudomonas syringae pv. tomato (strain ATCC BAA-871 / DC3000)</name>
    <dbReference type="NCBI Taxonomy" id="223283"/>
    <lineage>
        <taxon>Bacteria</taxon>
        <taxon>Pseudomonadati</taxon>
        <taxon>Pseudomonadota</taxon>
        <taxon>Gammaproteobacteria</taxon>
        <taxon>Pseudomonadales</taxon>
        <taxon>Pseudomonadaceae</taxon>
        <taxon>Pseudomonas</taxon>
    </lineage>
</organism>
<protein>
    <recommendedName>
        <fullName evidence="1">Undecaprenyl-diphosphatase</fullName>
        <ecNumber evidence="1">3.6.1.27</ecNumber>
    </recommendedName>
    <alternativeName>
        <fullName evidence="1">Bacitracin resistance protein</fullName>
    </alternativeName>
    <alternativeName>
        <fullName evidence="1">Undecaprenyl pyrophosphate phosphatase</fullName>
    </alternativeName>
</protein>
<gene>
    <name evidence="1" type="primary">uppP</name>
    <name type="synonym">bacA</name>
    <name type="synonym">upk</name>
    <name type="ordered locus">PSPTO_3141</name>
</gene>
<name>UPPP_PSESM</name>
<dbReference type="EC" id="3.6.1.27" evidence="1"/>
<dbReference type="EMBL" id="AE016853">
    <property type="protein sequence ID" value="AAO56628.1"/>
    <property type="molecule type" value="Genomic_DNA"/>
</dbReference>
<dbReference type="RefSeq" id="NP_792933.1">
    <property type="nucleotide sequence ID" value="NC_004578.1"/>
</dbReference>
<dbReference type="RefSeq" id="WP_005766254.1">
    <property type="nucleotide sequence ID" value="NC_004578.1"/>
</dbReference>
<dbReference type="SMR" id="Q880L3"/>
<dbReference type="STRING" id="223283.PSPTO_3141"/>
<dbReference type="GeneID" id="1184798"/>
<dbReference type="KEGG" id="pst:PSPTO_3141"/>
<dbReference type="PATRIC" id="fig|223283.9.peg.3207"/>
<dbReference type="eggNOG" id="COG1968">
    <property type="taxonomic scope" value="Bacteria"/>
</dbReference>
<dbReference type="HOGENOM" id="CLU_060296_2_0_6"/>
<dbReference type="OrthoDB" id="9808289at2"/>
<dbReference type="PhylomeDB" id="Q880L3"/>
<dbReference type="Proteomes" id="UP000002515">
    <property type="component" value="Chromosome"/>
</dbReference>
<dbReference type="GO" id="GO:0005886">
    <property type="term" value="C:plasma membrane"/>
    <property type="evidence" value="ECO:0007669"/>
    <property type="project" value="UniProtKB-SubCell"/>
</dbReference>
<dbReference type="GO" id="GO:0050380">
    <property type="term" value="F:undecaprenyl-diphosphatase activity"/>
    <property type="evidence" value="ECO:0007669"/>
    <property type="project" value="UniProtKB-UniRule"/>
</dbReference>
<dbReference type="GO" id="GO:0071555">
    <property type="term" value="P:cell wall organization"/>
    <property type="evidence" value="ECO:0007669"/>
    <property type="project" value="UniProtKB-KW"/>
</dbReference>
<dbReference type="GO" id="GO:0009252">
    <property type="term" value="P:peptidoglycan biosynthetic process"/>
    <property type="evidence" value="ECO:0007669"/>
    <property type="project" value="UniProtKB-KW"/>
</dbReference>
<dbReference type="GO" id="GO:0008360">
    <property type="term" value="P:regulation of cell shape"/>
    <property type="evidence" value="ECO:0007669"/>
    <property type="project" value="UniProtKB-KW"/>
</dbReference>
<dbReference type="GO" id="GO:0046677">
    <property type="term" value="P:response to antibiotic"/>
    <property type="evidence" value="ECO:0007669"/>
    <property type="project" value="UniProtKB-UniRule"/>
</dbReference>
<dbReference type="HAMAP" id="MF_01006">
    <property type="entry name" value="Undec_diphosphatase"/>
    <property type="match status" value="1"/>
</dbReference>
<dbReference type="InterPro" id="IPR003824">
    <property type="entry name" value="UppP"/>
</dbReference>
<dbReference type="NCBIfam" id="NF001389">
    <property type="entry name" value="PRK00281.1-2"/>
    <property type="match status" value="1"/>
</dbReference>
<dbReference type="NCBIfam" id="NF001390">
    <property type="entry name" value="PRK00281.1-4"/>
    <property type="match status" value="1"/>
</dbReference>
<dbReference type="NCBIfam" id="TIGR00753">
    <property type="entry name" value="undec_PP_bacA"/>
    <property type="match status" value="1"/>
</dbReference>
<dbReference type="PANTHER" id="PTHR30622">
    <property type="entry name" value="UNDECAPRENYL-DIPHOSPHATASE"/>
    <property type="match status" value="1"/>
</dbReference>
<dbReference type="PANTHER" id="PTHR30622:SF3">
    <property type="entry name" value="UNDECAPRENYL-DIPHOSPHATASE"/>
    <property type="match status" value="1"/>
</dbReference>
<dbReference type="Pfam" id="PF02673">
    <property type="entry name" value="BacA"/>
    <property type="match status" value="1"/>
</dbReference>
<accession>Q880L3</accession>